<feature type="initiator methionine" description="Removed" evidence="1">
    <location>
        <position position="1"/>
    </location>
</feature>
<feature type="chain" id="PRO_0000233137" description="Twinfilin-2">
    <location>
        <begin position="2"/>
        <end position="349"/>
    </location>
</feature>
<feature type="domain" description="ADF-H 1" evidence="2">
    <location>
        <begin position="4"/>
        <end position="139"/>
    </location>
</feature>
<feature type="domain" description="ADF-H 2" evidence="2">
    <location>
        <begin position="177"/>
        <end position="313"/>
    </location>
</feature>
<feature type="region of interest" description="Disordered" evidence="3">
    <location>
        <begin position="322"/>
        <end position="349"/>
    </location>
</feature>
<feature type="compositionally biased region" description="Basic residues" evidence="3">
    <location>
        <begin position="330"/>
        <end position="339"/>
    </location>
</feature>
<feature type="modified residue" description="N-acetylalanine" evidence="1">
    <location>
        <position position="2"/>
    </location>
</feature>
<feature type="modified residue" description="N6-acetyllysine" evidence="1">
    <location>
        <position position="14"/>
    </location>
</feature>
<feature type="modified residue" description="Phosphotyrosine" evidence="13 14">
    <location>
        <position position="309"/>
    </location>
</feature>
<feature type="modified residue" description="Phosphoserine" evidence="15">
    <location>
        <position position="349"/>
    </location>
</feature>
<feature type="splice variant" id="VSP_018053" description="In isoform 2." evidence="10 11">
    <original>MAHQTGIH</original>
    <variation>MFLVLI</variation>
    <location>
        <begin position="1"/>
        <end position="8"/>
    </location>
</feature>
<feature type="sequence conflict" description="In Ref. 4; BAE41799." evidence="12" ref="4">
    <original>Q</original>
    <variation>R</variation>
    <location>
        <position position="202"/>
    </location>
</feature>
<feature type="sequence conflict" description="In Ref. 4; BAB22293." evidence="12" ref="4">
    <original>P</original>
    <variation>L</variation>
    <location>
        <position position="226"/>
    </location>
</feature>
<accession>Q9Z0P5</accession>
<accession>Q3TD06</accession>
<accession>Q3TZG2</accession>
<accession>Q8BN77</accession>
<accession>Q9DCK8</accession>
<gene>
    <name type="primary">Twf2</name>
    <name type="synonym">Ptk9l</name>
</gene>
<organism>
    <name type="scientific">Mus musculus</name>
    <name type="common">Mouse</name>
    <dbReference type="NCBI Taxonomy" id="10090"/>
    <lineage>
        <taxon>Eukaryota</taxon>
        <taxon>Metazoa</taxon>
        <taxon>Chordata</taxon>
        <taxon>Craniata</taxon>
        <taxon>Vertebrata</taxon>
        <taxon>Euteleostomi</taxon>
        <taxon>Mammalia</taxon>
        <taxon>Eutheria</taxon>
        <taxon>Euarchontoglires</taxon>
        <taxon>Glires</taxon>
        <taxon>Rodentia</taxon>
        <taxon>Myomorpha</taxon>
        <taxon>Muroidea</taxon>
        <taxon>Muridae</taxon>
        <taxon>Murinae</taxon>
        <taxon>Mus</taxon>
        <taxon>Mus</taxon>
    </lineage>
</organism>
<evidence type="ECO:0000250" key="1">
    <source>
        <dbReference type="UniProtKB" id="Q6IBS0"/>
    </source>
</evidence>
<evidence type="ECO:0000255" key="2">
    <source>
        <dbReference type="PROSITE-ProRule" id="PRU00599"/>
    </source>
</evidence>
<evidence type="ECO:0000256" key="3">
    <source>
        <dbReference type="SAM" id="MobiDB-lite"/>
    </source>
</evidence>
<evidence type="ECO:0000269" key="4">
    <source>
    </source>
</evidence>
<evidence type="ECO:0000269" key="5">
    <source>
    </source>
</evidence>
<evidence type="ECO:0000269" key="6">
    <source>
    </source>
</evidence>
<evidence type="ECO:0000269" key="7">
    <source>
    </source>
</evidence>
<evidence type="ECO:0000269" key="8">
    <source>
    </source>
</evidence>
<evidence type="ECO:0000269" key="9">
    <source>
    </source>
</evidence>
<evidence type="ECO:0000303" key="10">
    <source>
    </source>
</evidence>
<evidence type="ECO:0000303" key="11">
    <source>
    </source>
</evidence>
<evidence type="ECO:0000305" key="12"/>
<evidence type="ECO:0007744" key="13">
    <source>
    </source>
</evidence>
<evidence type="ECO:0007744" key="14">
    <source>
    </source>
</evidence>
<evidence type="ECO:0007744" key="15">
    <source>
    </source>
</evidence>
<dbReference type="EMBL" id="Y17808">
    <property type="protein sequence ID" value="CAB38083.1"/>
    <property type="molecule type" value="mRNA"/>
</dbReference>
<dbReference type="EMBL" id="AY267189">
    <property type="protein sequence ID" value="AAP31405.1"/>
    <property type="molecule type" value="mRNA"/>
</dbReference>
<dbReference type="EMBL" id="AK002699">
    <property type="protein sequence ID" value="BAB22293.1"/>
    <property type="molecule type" value="mRNA"/>
</dbReference>
<dbReference type="EMBL" id="AK084026">
    <property type="protein sequence ID" value="BAC39101.1"/>
    <property type="molecule type" value="mRNA"/>
</dbReference>
<dbReference type="EMBL" id="AK087422">
    <property type="protein sequence ID" value="BAC39867.1"/>
    <property type="molecule type" value="mRNA"/>
</dbReference>
<dbReference type="EMBL" id="AK155204">
    <property type="protein sequence ID" value="BAE33117.1"/>
    <property type="molecule type" value="mRNA"/>
</dbReference>
<dbReference type="EMBL" id="AK157886">
    <property type="protein sequence ID" value="BAE34246.1"/>
    <property type="molecule type" value="mRNA"/>
</dbReference>
<dbReference type="EMBL" id="AK166900">
    <property type="protein sequence ID" value="BAE39103.1"/>
    <property type="molecule type" value="mRNA"/>
</dbReference>
<dbReference type="EMBL" id="AK170441">
    <property type="protein sequence ID" value="BAE41799.1"/>
    <property type="molecule type" value="mRNA"/>
</dbReference>
<dbReference type="EMBL" id="BC003338">
    <property type="protein sequence ID" value="AAH03338.1"/>
    <property type="molecule type" value="mRNA"/>
</dbReference>
<dbReference type="CCDS" id="CCDS23473.1">
    <molecule id="Q9Z0P5-1"/>
</dbReference>
<dbReference type="RefSeq" id="NP_036006.1">
    <molecule id="Q9Z0P5-1"/>
    <property type="nucleotide sequence ID" value="NM_011876.3"/>
</dbReference>
<dbReference type="PDB" id="7DS3">
    <property type="method" value="X-ray"/>
    <property type="resolution" value="2.09 A"/>
    <property type="chains" value="C=315-344"/>
</dbReference>
<dbReference type="PDBsum" id="7DS3"/>
<dbReference type="SMR" id="Q9Z0P5"/>
<dbReference type="BioGRID" id="204847">
    <property type="interactions" value="21"/>
</dbReference>
<dbReference type="DIP" id="DIP-61549N"/>
<dbReference type="FunCoup" id="Q9Z0P5">
    <property type="interactions" value="899"/>
</dbReference>
<dbReference type="IntAct" id="Q9Z0P5">
    <property type="interactions" value="2"/>
</dbReference>
<dbReference type="STRING" id="10090.ENSMUSP00000024047"/>
<dbReference type="GlyGen" id="Q9Z0P5">
    <property type="glycosylation" value="1 site, 1 O-linked glycan (1 site)"/>
</dbReference>
<dbReference type="iPTMnet" id="Q9Z0P5"/>
<dbReference type="PhosphoSitePlus" id="Q9Z0P5"/>
<dbReference type="SwissPalm" id="Q9Z0P5"/>
<dbReference type="jPOST" id="Q9Z0P5"/>
<dbReference type="PaxDb" id="10090-ENSMUSP00000024047"/>
<dbReference type="PeptideAtlas" id="Q9Z0P5"/>
<dbReference type="ProteomicsDB" id="300162">
    <molecule id="Q9Z0P5-1"/>
</dbReference>
<dbReference type="ProteomicsDB" id="300163">
    <molecule id="Q9Z0P5-2"/>
</dbReference>
<dbReference type="Pumba" id="Q9Z0P5"/>
<dbReference type="Antibodypedia" id="46152">
    <property type="antibodies" value="242 antibodies from 28 providers"/>
</dbReference>
<dbReference type="DNASU" id="23999"/>
<dbReference type="Ensembl" id="ENSMUST00000024047.12">
    <molecule id="Q9Z0P5-1"/>
    <property type="protein sequence ID" value="ENSMUSP00000024047.6"/>
    <property type="gene ID" value="ENSMUSG00000023277.14"/>
</dbReference>
<dbReference type="Ensembl" id="ENSMUST00000188650.2">
    <molecule id="Q9Z0P5-2"/>
    <property type="protein sequence ID" value="ENSMUSP00000140339.2"/>
    <property type="gene ID" value="ENSMUSG00000023277.14"/>
</dbReference>
<dbReference type="GeneID" id="23999"/>
<dbReference type="KEGG" id="mmu:23999"/>
<dbReference type="UCSC" id="uc009rjf.1">
    <molecule id="Q9Z0P5-1"/>
    <property type="organism name" value="mouse"/>
</dbReference>
<dbReference type="UCSC" id="uc009rjg.1">
    <molecule id="Q9Z0P5-2"/>
    <property type="organism name" value="mouse"/>
</dbReference>
<dbReference type="AGR" id="MGI:1346078"/>
<dbReference type="CTD" id="11344"/>
<dbReference type="MGI" id="MGI:1346078">
    <property type="gene designation" value="Twf2"/>
</dbReference>
<dbReference type="VEuPathDB" id="HostDB:ENSMUSG00000023277"/>
<dbReference type="eggNOG" id="KOG1747">
    <property type="taxonomic scope" value="Eukaryota"/>
</dbReference>
<dbReference type="GeneTree" id="ENSGT00530000063868"/>
<dbReference type="HOGENOM" id="CLU_031995_1_0_1"/>
<dbReference type="InParanoid" id="Q9Z0P5"/>
<dbReference type="OMA" id="AMTHQTG"/>
<dbReference type="OrthoDB" id="10006997at2759"/>
<dbReference type="PhylomeDB" id="Q9Z0P5"/>
<dbReference type="TreeFam" id="TF352598"/>
<dbReference type="BioGRID-ORCS" id="23999">
    <property type="hits" value="3 hits in 79 CRISPR screens"/>
</dbReference>
<dbReference type="ChiTaRS" id="Twf2">
    <property type="organism name" value="mouse"/>
</dbReference>
<dbReference type="PRO" id="PR:Q9Z0P5"/>
<dbReference type="Proteomes" id="UP000000589">
    <property type="component" value="Chromosome 9"/>
</dbReference>
<dbReference type="RNAct" id="Q9Z0P5">
    <property type="molecule type" value="protein"/>
</dbReference>
<dbReference type="Bgee" id="ENSMUSG00000023277">
    <property type="expression patterns" value="Expressed in intercostal muscle and 254 other cell types or tissues"/>
</dbReference>
<dbReference type="ExpressionAtlas" id="Q9Z0P5">
    <property type="expression patterns" value="baseline and differential"/>
</dbReference>
<dbReference type="GO" id="GO:0005737">
    <property type="term" value="C:cytoplasm"/>
    <property type="evidence" value="ECO:0000266"/>
    <property type="project" value="MGI"/>
</dbReference>
<dbReference type="GO" id="GO:0005856">
    <property type="term" value="C:cytoskeleton"/>
    <property type="evidence" value="ECO:0007669"/>
    <property type="project" value="UniProtKB-SubCell"/>
</dbReference>
<dbReference type="GO" id="GO:0005829">
    <property type="term" value="C:cytosol"/>
    <property type="evidence" value="ECO:0000304"/>
    <property type="project" value="Reactome"/>
</dbReference>
<dbReference type="GO" id="GO:0030175">
    <property type="term" value="C:filopodium"/>
    <property type="evidence" value="ECO:0000314"/>
    <property type="project" value="BHF-UCL"/>
</dbReference>
<dbReference type="GO" id="GO:0030426">
    <property type="term" value="C:growth cone"/>
    <property type="evidence" value="ECO:0007669"/>
    <property type="project" value="Ensembl"/>
</dbReference>
<dbReference type="GO" id="GO:0030027">
    <property type="term" value="C:lamellipodium"/>
    <property type="evidence" value="ECO:0000314"/>
    <property type="project" value="BHF-UCL"/>
</dbReference>
<dbReference type="GO" id="GO:0030016">
    <property type="term" value="C:myofibril"/>
    <property type="evidence" value="ECO:0000314"/>
    <property type="project" value="BHF-UCL"/>
</dbReference>
<dbReference type="GO" id="GO:0048471">
    <property type="term" value="C:perinuclear region of cytoplasm"/>
    <property type="evidence" value="ECO:0000314"/>
    <property type="project" value="BHF-UCL"/>
</dbReference>
<dbReference type="GO" id="GO:0032420">
    <property type="term" value="C:stereocilium"/>
    <property type="evidence" value="ECO:0000314"/>
    <property type="project" value="BHF-UCL"/>
</dbReference>
<dbReference type="GO" id="GO:0003785">
    <property type="term" value="F:actin monomer binding"/>
    <property type="evidence" value="ECO:0000314"/>
    <property type="project" value="BHF-UCL"/>
</dbReference>
<dbReference type="GO" id="GO:0005524">
    <property type="term" value="F:ATP binding"/>
    <property type="evidence" value="ECO:0000266"/>
    <property type="project" value="MGI"/>
</dbReference>
<dbReference type="GO" id="GO:0005546">
    <property type="term" value="F:phosphatidylinositol-4,5-bisphosphate binding"/>
    <property type="evidence" value="ECO:0000314"/>
    <property type="project" value="BHF-UCL"/>
</dbReference>
<dbReference type="GO" id="GO:0005080">
    <property type="term" value="F:protein kinase C binding"/>
    <property type="evidence" value="ECO:0000266"/>
    <property type="project" value="MGI"/>
</dbReference>
<dbReference type="GO" id="GO:0051016">
    <property type="term" value="P:barbed-end actin filament capping"/>
    <property type="evidence" value="ECO:0000314"/>
    <property type="project" value="BHF-UCL"/>
</dbReference>
<dbReference type="GO" id="GO:0030030">
    <property type="term" value="P:cell projection organization"/>
    <property type="evidence" value="ECO:0007669"/>
    <property type="project" value="UniProtKB-KW"/>
</dbReference>
<dbReference type="GO" id="GO:0071363">
    <property type="term" value="P:cellular response to growth factor stimulus"/>
    <property type="evidence" value="ECO:0007669"/>
    <property type="project" value="Ensembl"/>
</dbReference>
<dbReference type="GO" id="GO:0071300">
    <property type="term" value="P:cellular response to retinoic acid"/>
    <property type="evidence" value="ECO:0007669"/>
    <property type="project" value="Ensembl"/>
</dbReference>
<dbReference type="GO" id="GO:0035556">
    <property type="term" value="P:intracellular signal transduction"/>
    <property type="evidence" value="ECO:0000266"/>
    <property type="project" value="MGI"/>
</dbReference>
<dbReference type="GO" id="GO:0030837">
    <property type="term" value="P:negative regulation of actin filament polymerization"/>
    <property type="evidence" value="ECO:0000314"/>
    <property type="project" value="BHF-UCL"/>
</dbReference>
<dbReference type="GO" id="GO:0045773">
    <property type="term" value="P:positive regulation of axon extension"/>
    <property type="evidence" value="ECO:0007669"/>
    <property type="project" value="Ensembl"/>
</dbReference>
<dbReference type="GO" id="GO:0010592">
    <property type="term" value="P:positive regulation of lamellipodium assembly"/>
    <property type="evidence" value="ECO:0007669"/>
    <property type="project" value="Ensembl"/>
</dbReference>
<dbReference type="GO" id="GO:0010976">
    <property type="term" value="P:positive regulation of neuron projection development"/>
    <property type="evidence" value="ECO:0007669"/>
    <property type="project" value="Ensembl"/>
</dbReference>
<dbReference type="GO" id="GO:0032532">
    <property type="term" value="P:regulation of microvillus length"/>
    <property type="evidence" value="ECO:0000305"/>
    <property type="project" value="BHF-UCL"/>
</dbReference>
<dbReference type="CDD" id="cd11284">
    <property type="entry name" value="ADF_Twf-C_like"/>
    <property type="match status" value="1"/>
</dbReference>
<dbReference type="CDD" id="cd11285">
    <property type="entry name" value="ADF_Twf-N_like"/>
    <property type="match status" value="1"/>
</dbReference>
<dbReference type="FunFam" id="3.40.20.10:FF:000007">
    <property type="entry name" value="Twinfilin-1 isoform 1"/>
    <property type="match status" value="1"/>
</dbReference>
<dbReference type="FunFam" id="3.40.20.10:FF:000012">
    <property type="entry name" value="Twinfilin-1 isoform 1"/>
    <property type="match status" value="1"/>
</dbReference>
<dbReference type="Gene3D" id="3.40.20.10">
    <property type="entry name" value="Severin"/>
    <property type="match status" value="2"/>
</dbReference>
<dbReference type="InterPro" id="IPR002108">
    <property type="entry name" value="ADF-H"/>
</dbReference>
<dbReference type="InterPro" id="IPR029006">
    <property type="entry name" value="ADF-H/Gelsolin-like_dom_sf"/>
</dbReference>
<dbReference type="InterPro" id="IPR028458">
    <property type="entry name" value="Twinfilin"/>
</dbReference>
<dbReference type="PANTHER" id="PTHR13759">
    <property type="entry name" value="TWINFILIN"/>
    <property type="match status" value="1"/>
</dbReference>
<dbReference type="PANTHER" id="PTHR13759:SF9">
    <property type="entry name" value="TWINFILIN-2"/>
    <property type="match status" value="1"/>
</dbReference>
<dbReference type="Pfam" id="PF00241">
    <property type="entry name" value="Cofilin_ADF"/>
    <property type="match status" value="2"/>
</dbReference>
<dbReference type="SMART" id="SM00102">
    <property type="entry name" value="ADF"/>
    <property type="match status" value="2"/>
</dbReference>
<dbReference type="SUPFAM" id="SSF55753">
    <property type="entry name" value="Actin depolymerizing proteins"/>
    <property type="match status" value="2"/>
</dbReference>
<dbReference type="PROSITE" id="PS51263">
    <property type="entry name" value="ADF_H"/>
    <property type="match status" value="2"/>
</dbReference>
<comment type="function">
    <text evidence="6 8">Actin-binding protein involved in motile and morphological processes. Inhibits actin polymerization, likely by sequestering G-actin. By capping the barbed ends of filaments, it also regulates motility. Seems to play an important role in clathrin-mediated endocytosis and distribution of endocytic organelles. May play a role in regulating the mature length of the middle and short rows of stereocilia.</text>
</comment>
<comment type="subunit">
    <text evidence="5 6 7">Interacts with G-actin; ADP-actin form and capping protein (CP). Isoform 2 interacts (via its N-terminal ADF-H domain) with G-actin (ADP-bound form) with significantly higher affinity than isoform 1. May also be able to interact with TWF1 and phosphoinositides, PI(4,5)P2. When bound to PI(4,5)P2, it is down-regulated. Interacts with MYO7A.</text>
</comment>
<comment type="subcellular location">
    <subcellularLocation>
        <location evidence="8">Cytoplasm</location>
        <location evidence="8">Cytoskeleton</location>
    </subcellularLocation>
    <subcellularLocation>
        <location evidence="4">Cytoplasm</location>
        <location evidence="4">Perinuclear region</location>
    </subcellularLocation>
    <subcellularLocation>
        <location evidence="7 8">Cell projection</location>
        <location evidence="7 8">Stereocilium</location>
    </subcellularLocation>
    <text evidence="6 8">Perinuclear and G-actin-rich cortical actin structure sublocalization. Isoform 2 found also along myofibrils in cardiomyocytes (PubMed:18837697). Localized in cochlea hair cells to the tips of the middle and short rows of stereocilia (PubMed:19955359).</text>
</comment>
<comment type="alternative products">
    <event type="alternative promoter"/>
    <isoform>
        <id>Q9Z0P5-1</id>
        <name>1</name>
        <name>Twf2a</name>
        <sequence type="displayed"/>
    </isoform>
    <isoform>
        <id>Q9Z0P5-2</id>
        <name>2</name>
        <name>Twf2b</name>
        <sequence type="described" ref="VSP_018053"/>
    </isoform>
</comment>
<comment type="tissue specificity">
    <text evidence="4 6">Isoform 1 is ubiquitously expressed (at protein level). Isoform 2 expression is restricted to heart and skeletal muscle where it is the predominant form.</text>
</comment>
<comment type="developmental stage">
    <text evidence="5">Expression was relatively weak during all of the embryonic stages. At 14.5 dpc, a slight increase in the expression could be observed in heart, CNS, and PNS. At 18.5 dpc, it is strongly expressed in the inner ear, hair cells and in the head muscles. No expression is detected in the nasal epithelium or in the skin keratinocytes.</text>
</comment>
<comment type="PTM">
    <text>Phosphorylated on both serine/threonine and tyrosine.</text>
</comment>
<comment type="disruption phenotype">
    <text evidence="9">Mice lacking isoform 1 develop normally to adulthood, are fertile, and do not exhibit obvious morphological or behavioral abnormalities.</text>
</comment>
<comment type="similarity">
    <text evidence="12">Belongs to the actin-binding proteins ADF family. Twinfilin subfamily.</text>
</comment>
<comment type="online information" name="Protein Spotlight">
    <link uri="https://www.proteinspotlight.org/back_issues/073"/>
    <text>Molecular embrace - Issue 73 of August 2006</text>
</comment>
<sequence length="349" mass="39471">MAHQTGIHATEELKEFFAKARAGSIRLIKVIIEDEQLVLGASQEPVGRWDQDYDRAVLPLLDAQEPCYLLFRLDSQNAQGFEWLFLAWSPDNSPVRLKMLYAATRATVKKEFGGGHIKDELFGTVKDDLSLAGYQKHLSSCAAPAPLTSAERELQQIRINEVKTEISVESKHQTLQGLAFPLQPEAQRALQQLKQKTVNYIQLKLDLERETIELVHTEPTNVAQLPSRIPRDAARYHFFLYKHTHEGDALESVVFIYSMPGYKCSIKERMLYSSCKSRLLDSVEQDFQLEIAKKIEIGDGAELTAEFLYDEVHPKQHAFKQAFAKPKGPGGKRGHKRLIRGPGENGEDS</sequence>
<reference key="1">
    <citation type="journal article" date="1999" name="Eur. J. Biochem.">
        <title>Cloning, expression and characterization of an A6 related protein.</title>
        <authorList>
            <person name="Rohwer A."/>
            <person name="Kittstein W."/>
            <person name="Marks F."/>
            <person name="Gschwendt M."/>
        </authorList>
    </citation>
    <scope>NUCLEOTIDE SEQUENCE [MRNA] (ISOFORM 1)</scope>
    <scope>TISSUE SPECIFICITY</scope>
    <scope>SUBCELLULAR LOCATION</scope>
</reference>
<reference key="2">
    <citation type="journal article" date="2003" name="J. Biol. Chem.">
        <title>Mammals have two twinfilin isoforms whose subcellular localizations and tissue distributions are differentially regulated.</title>
        <authorList>
            <person name="Vartiainen M.K."/>
            <person name="Sarkkinen E.M."/>
            <person name="Matilainen T."/>
            <person name="Salminen M."/>
            <person name="Lappalainen P."/>
        </authorList>
    </citation>
    <scope>NUCLEOTIDE SEQUENCE [MRNA] (ISOFORM 1)</scope>
    <scope>INTERACTION WITH TWF1 AND PHOSPHOINOSITIDE</scope>
    <scope>DEVELOPMENTAL STAGE</scope>
    <source>
        <strain>NMRI</strain>
    </source>
</reference>
<reference key="3">
    <citation type="journal article" date="2009" name="Biochem. J.">
        <title>Two biochemically distinct and tissue-specific twinfilin isoforms are generated from the mouse Twf2 gene by alternative promoter usage.</title>
        <authorList>
            <person name="Nevalainen E.M."/>
            <person name="Skwarek-Maruszewska A."/>
            <person name="Braun A."/>
            <person name="Moser M."/>
            <person name="Lappalainen P."/>
        </authorList>
    </citation>
    <scope>NUCLEOTIDE SEQUENCE [MRNA] (ISOFORMS 1 AND 2)</scope>
    <scope>ALTERNATIVE PROMOTER USAGE</scope>
    <scope>FUNCTION</scope>
    <scope>SUBUNIT</scope>
    <scope>SUBCELLULAR LOCATION</scope>
    <scope>TISSUE SPECIFICITY</scope>
</reference>
<reference key="4">
    <citation type="journal article" date="2005" name="Science">
        <title>The transcriptional landscape of the mammalian genome.</title>
        <authorList>
            <person name="Carninci P."/>
            <person name="Kasukawa T."/>
            <person name="Katayama S."/>
            <person name="Gough J."/>
            <person name="Frith M.C."/>
            <person name="Maeda N."/>
            <person name="Oyama R."/>
            <person name="Ravasi T."/>
            <person name="Lenhard B."/>
            <person name="Wells C."/>
            <person name="Kodzius R."/>
            <person name="Shimokawa K."/>
            <person name="Bajic V.B."/>
            <person name="Brenner S.E."/>
            <person name="Batalov S."/>
            <person name="Forrest A.R."/>
            <person name="Zavolan M."/>
            <person name="Davis M.J."/>
            <person name="Wilming L.G."/>
            <person name="Aidinis V."/>
            <person name="Allen J.E."/>
            <person name="Ambesi-Impiombato A."/>
            <person name="Apweiler R."/>
            <person name="Aturaliya R.N."/>
            <person name="Bailey T.L."/>
            <person name="Bansal M."/>
            <person name="Baxter L."/>
            <person name="Beisel K.W."/>
            <person name="Bersano T."/>
            <person name="Bono H."/>
            <person name="Chalk A.M."/>
            <person name="Chiu K.P."/>
            <person name="Choudhary V."/>
            <person name="Christoffels A."/>
            <person name="Clutterbuck D.R."/>
            <person name="Crowe M.L."/>
            <person name="Dalla E."/>
            <person name="Dalrymple B.P."/>
            <person name="de Bono B."/>
            <person name="Della Gatta G."/>
            <person name="di Bernardo D."/>
            <person name="Down T."/>
            <person name="Engstrom P."/>
            <person name="Fagiolini M."/>
            <person name="Faulkner G."/>
            <person name="Fletcher C.F."/>
            <person name="Fukushima T."/>
            <person name="Furuno M."/>
            <person name="Futaki S."/>
            <person name="Gariboldi M."/>
            <person name="Georgii-Hemming P."/>
            <person name="Gingeras T.R."/>
            <person name="Gojobori T."/>
            <person name="Green R.E."/>
            <person name="Gustincich S."/>
            <person name="Harbers M."/>
            <person name="Hayashi Y."/>
            <person name="Hensch T.K."/>
            <person name="Hirokawa N."/>
            <person name="Hill D."/>
            <person name="Huminiecki L."/>
            <person name="Iacono M."/>
            <person name="Ikeo K."/>
            <person name="Iwama A."/>
            <person name="Ishikawa T."/>
            <person name="Jakt M."/>
            <person name="Kanapin A."/>
            <person name="Katoh M."/>
            <person name="Kawasawa Y."/>
            <person name="Kelso J."/>
            <person name="Kitamura H."/>
            <person name="Kitano H."/>
            <person name="Kollias G."/>
            <person name="Krishnan S.P."/>
            <person name="Kruger A."/>
            <person name="Kummerfeld S.K."/>
            <person name="Kurochkin I.V."/>
            <person name="Lareau L.F."/>
            <person name="Lazarevic D."/>
            <person name="Lipovich L."/>
            <person name="Liu J."/>
            <person name="Liuni S."/>
            <person name="McWilliam S."/>
            <person name="Madan Babu M."/>
            <person name="Madera M."/>
            <person name="Marchionni L."/>
            <person name="Matsuda H."/>
            <person name="Matsuzawa S."/>
            <person name="Miki H."/>
            <person name="Mignone F."/>
            <person name="Miyake S."/>
            <person name="Morris K."/>
            <person name="Mottagui-Tabar S."/>
            <person name="Mulder N."/>
            <person name="Nakano N."/>
            <person name="Nakauchi H."/>
            <person name="Ng P."/>
            <person name="Nilsson R."/>
            <person name="Nishiguchi S."/>
            <person name="Nishikawa S."/>
            <person name="Nori F."/>
            <person name="Ohara O."/>
            <person name="Okazaki Y."/>
            <person name="Orlando V."/>
            <person name="Pang K.C."/>
            <person name="Pavan W.J."/>
            <person name="Pavesi G."/>
            <person name="Pesole G."/>
            <person name="Petrovsky N."/>
            <person name="Piazza S."/>
            <person name="Reed J."/>
            <person name="Reid J.F."/>
            <person name="Ring B.Z."/>
            <person name="Ringwald M."/>
            <person name="Rost B."/>
            <person name="Ruan Y."/>
            <person name="Salzberg S.L."/>
            <person name="Sandelin A."/>
            <person name="Schneider C."/>
            <person name="Schoenbach C."/>
            <person name="Sekiguchi K."/>
            <person name="Semple C.A."/>
            <person name="Seno S."/>
            <person name="Sessa L."/>
            <person name="Sheng Y."/>
            <person name="Shibata Y."/>
            <person name="Shimada H."/>
            <person name="Shimada K."/>
            <person name="Silva D."/>
            <person name="Sinclair B."/>
            <person name="Sperling S."/>
            <person name="Stupka E."/>
            <person name="Sugiura K."/>
            <person name="Sultana R."/>
            <person name="Takenaka Y."/>
            <person name="Taki K."/>
            <person name="Tammoja K."/>
            <person name="Tan S.L."/>
            <person name="Tang S."/>
            <person name="Taylor M.S."/>
            <person name="Tegner J."/>
            <person name="Teichmann S.A."/>
            <person name="Ueda H.R."/>
            <person name="van Nimwegen E."/>
            <person name="Verardo R."/>
            <person name="Wei C.L."/>
            <person name="Yagi K."/>
            <person name="Yamanishi H."/>
            <person name="Zabarovsky E."/>
            <person name="Zhu S."/>
            <person name="Zimmer A."/>
            <person name="Hide W."/>
            <person name="Bult C."/>
            <person name="Grimmond S.M."/>
            <person name="Teasdale R.D."/>
            <person name="Liu E.T."/>
            <person name="Brusic V."/>
            <person name="Quackenbush J."/>
            <person name="Wahlestedt C."/>
            <person name="Mattick J.S."/>
            <person name="Hume D.A."/>
            <person name="Kai C."/>
            <person name="Sasaki D."/>
            <person name="Tomaru Y."/>
            <person name="Fukuda S."/>
            <person name="Kanamori-Katayama M."/>
            <person name="Suzuki M."/>
            <person name="Aoki J."/>
            <person name="Arakawa T."/>
            <person name="Iida J."/>
            <person name="Imamura K."/>
            <person name="Itoh M."/>
            <person name="Kato T."/>
            <person name="Kawaji H."/>
            <person name="Kawagashira N."/>
            <person name="Kawashima T."/>
            <person name="Kojima M."/>
            <person name="Kondo S."/>
            <person name="Konno H."/>
            <person name="Nakano K."/>
            <person name="Ninomiya N."/>
            <person name="Nishio T."/>
            <person name="Okada M."/>
            <person name="Plessy C."/>
            <person name="Shibata K."/>
            <person name="Shiraki T."/>
            <person name="Suzuki S."/>
            <person name="Tagami M."/>
            <person name="Waki K."/>
            <person name="Watahiki A."/>
            <person name="Okamura-Oho Y."/>
            <person name="Suzuki H."/>
            <person name="Kawai J."/>
            <person name="Hayashizaki Y."/>
        </authorList>
    </citation>
    <scope>NUCLEOTIDE SEQUENCE [LARGE SCALE MRNA] (ISOFORMS 1 AND 2)</scope>
    <source>
        <strain>C57BL/6J</strain>
        <strain>NOD</strain>
        <tissue>Eye</tissue>
        <tissue>Inner ear</tissue>
        <tissue>Kidney</tissue>
        <tissue>Spinal ganglion</tissue>
    </source>
</reference>
<reference key="5">
    <citation type="journal article" date="2004" name="Genome Res.">
        <title>The status, quality, and expansion of the NIH full-length cDNA project: the Mammalian Gene Collection (MGC).</title>
        <authorList>
            <consortium name="The MGC Project Team"/>
        </authorList>
    </citation>
    <scope>NUCLEOTIDE SEQUENCE [LARGE SCALE MRNA] (ISOFORM 1)</scope>
    <source>
        <strain>NMRI</strain>
        <tissue>Mammary tumor</tissue>
    </source>
</reference>
<reference key="6">
    <citation type="submission" date="2009-01" db="UniProtKB">
        <authorList>
            <person name="Lubec G."/>
            <person name="Klug S."/>
            <person name="Sunyer B."/>
            <person name="Chen W.-Q."/>
        </authorList>
    </citation>
    <scope>PROTEIN SEQUENCE OF 30-48; 56-72; 111-136; 172-188; 197-204; 210-228 AND 294-315</scope>
    <scope>IDENTIFICATION BY MASS SPECTROMETRY</scope>
    <source>
        <strain>OF1</strain>
        <tissue>Hippocampus</tissue>
    </source>
</reference>
<reference key="7">
    <citation type="journal article" date="2005" name="Nat. Biotechnol.">
        <title>Immunoaffinity profiling of tyrosine phosphorylation in cancer cells.</title>
        <authorList>
            <person name="Rush J."/>
            <person name="Moritz A."/>
            <person name="Lee K.A."/>
            <person name="Guo A."/>
            <person name="Goss V.L."/>
            <person name="Spek E.J."/>
            <person name="Zhang H."/>
            <person name="Zha X.-M."/>
            <person name="Polakiewicz R.D."/>
            <person name="Comb M.J."/>
        </authorList>
    </citation>
    <scope>PHOSPHORYLATION [LARGE SCALE ANALYSIS] AT TYR-309</scope>
    <scope>IDENTIFICATION BY MASS SPECTROMETRY [LARGE SCALE ANALYSIS]</scope>
</reference>
<reference key="8">
    <citation type="journal article" date="2008" name="J. Proteome Res.">
        <title>Large-scale identification and evolution indexing of tyrosine phosphorylation sites from murine brain.</title>
        <authorList>
            <person name="Ballif B.A."/>
            <person name="Carey G.R."/>
            <person name="Sunyaev S.R."/>
            <person name="Gygi S.P."/>
        </authorList>
    </citation>
    <scope>PHOSPHORYLATION [LARGE SCALE ANALYSIS] AT TYR-309</scope>
    <scope>IDENTIFICATION BY MASS SPECTROMETRY [LARGE SCALE ANALYSIS]</scope>
    <source>
        <tissue>Brain</tissue>
    </source>
</reference>
<reference key="9">
    <citation type="journal article" date="2009" name="J. Neurosci.">
        <title>Twinfilin 2 regulates actin filament lengths in cochlear stereocilia.</title>
        <authorList>
            <person name="Peng A.W."/>
            <person name="Belyantseva I.A."/>
            <person name="Hsu P.D."/>
            <person name="Friedman T.B."/>
            <person name="Heller S."/>
        </authorList>
    </citation>
    <scope>FUNCTION</scope>
    <scope>SUBCELLULAR LOCATION</scope>
    <source>
        <strain>C57BL/6J</strain>
        <tissue>Cochlea</tissue>
    </source>
</reference>
<reference key="10">
    <citation type="journal article" date="2009" name="PLoS ONE">
        <title>MyosinVIIa interacts with Twinfilin-2 at the tips of mechanosensory stereocilia in the inner ear.</title>
        <authorList>
            <person name="Rzadzinska A.K."/>
            <person name="Nevalainen E.M."/>
            <person name="Prosser H.M."/>
            <person name="Lappalainen P."/>
            <person name="Steel K.P."/>
        </authorList>
    </citation>
    <scope>INTERACTION WITH MYO7A</scope>
    <scope>SUBCELLULAR LOCATION</scope>
    <source>
        <strain>C3Heb/FeJ</strain>
        <tissue>Inner ear</tissue>
    </source>
</reference>
<reference key="11">
    <citation type="journal article" date="2010" name="Cell">
        <title>A tissue-specific atlas of mouse protein phosphorylation and expression.</title>
        <authorList>
            <person name="Huttlin E.L."/>
            <person name="Jedrychowski M.P."/>
            <person name="Elias J.E."/>
            <person name="Goswami T."/>
            <person name="Rad R."/>
            <person name="Beausoleil S.A."/>
            <person name="Villen J."/>
            <person name="Haas W."/>
            <person name="Sowa M.E."/>
            <person name="Gygi S.P."/>
        </authorList>
    </citation>
    <scope>PHOSPHORYLATION [LARGE SCALE ANALYSIS] AT SER-349</scope>
    <scope>IDENTIFICATION BY MASS SPECTROMETRY [LARGE SCALE ANALYSIS]</scope>
    <source>
        <tissue>Brain</tissue>
        <tissue>Brown adipose tissue</tissue>
        <tissue>Heart</tissue>
        <tissue>Kidney</tissue>
        <tissue>Lung</tissue>
        <tissue>Pancreas</tissue>
        <tissue>Spleen</tissue>
        <tissue>Testis</tissue>
    </source>
</reference>
<reference key="12">
    <citation type="journal article" date="2011" name="PLoS ONE">
        <title>Twinfilin-2a is dispensable for mouse development.</title>
        <authorList>
            <person name="Nevalainen E.M."/>
            <person name="Braun A."/>
            <person name="Vartiainen M.K."/>
            <person name="Serlachius M."/>
            <person name="Andersson L.C."/>
            <person name="Moser M."/>
            <person name="Lappalainen P."/>
        </authorList>
    </citation>
    <scope>DISRUPTION PHENOTYPE</scope>
    <source>
        <strain>C57BL/6J</strain>
    </source>
</reference>
<protein>
    <recommendedName>
        <fullName>Twinfilin-2</fullName>
    </recommendedName>
    <alternativeName>
        <fullName>A6-related protein</fullName>
        <shortName>mA6RP</shortName>
    </alternativeName>
    <alternativeName>
        <fullName>Twinfilin-1-like protein</fullName>
    </alternativeName>
</protein>
<keyword id="KW-0002">3D-structure</keyword>
<keyword id="KW-0007">Acetylation</keyword>
<keyword id="KW-0009">Actin-binding</keyword>
<keyword id="KW-0877">Alternative promoter usage</keyword>
<keyword id="KW-0966">Cell projection</keyword>
<keyword id="KW-0970">Cilium biogenesis/degradation</keyword>
<keyword id="KW-0963">Cytoplasm</keyword>
<keyword id="KW-0206">Cytoskeleton</keyword>
<keyword id="KW-0217">Developmental protein</keyword>
<keyword id="KW-0903">Direct protein sequencing</keyword>
<keyword id="KW-0597">Phosphoprotein</keyword>
<keyword id="KW-1185">Reference proteome</keyword>
<keyword id="KW-0677">Repeat</keyword>
<name>TWF2_MOUSE</name>
<proteinExistence type="evidence at protein level"/>